<protein>
    <recommendedName>
        <fullName evidence="1">Homoserine O-succinyltransferase</fullName>
        <shortName evidence="1">HST</shortName>
        <ecNumber evidence="1">2.3.1.46</ecNumber>
    </recommendedName>
    <alternativeName>
        <fullName evidence="1">Homoserine transsuccinylase</fullName>
        <shortName evidence="1">HTS</shortName>
    </alternativeName>
</protein>
<proteinExistence type="inferred from homology"/>
<name>METXS_ACIB3</name>
<keyword id="KW-0012">Acyltransferase</keyword>
<keyword id="KW-0028">Amino-acid biosynthesis</keyword>
<keyword id="KW-0963">Cytoplasm</keyword>
<keyword id="KW-0486">Methionine biosynthesis</keyword>
<keyword id="KW-0808">Transferase</keyword>
<comment type="function">
    <text evidence="1">Transfers a succinyl group from succinyl-CoA to L-homoserine, forming succinyl-L-homoserine.</text>
</comment>
<comment type="catalytic activity">
    <reaction evidence="1">
        <text>L-homoserine + succinyl-CoA = O-succinyl-L-homoserine + CoA</text>
        <dbReference type="Rhea" id="RHEA:22008"/>
        <dbReference type="ChEBI" id="CHEBI:57287"/>
        <dbReference type="ChEBI" id="CHEBI:57292"/>
        <dbReference type="ChEBI" id="CHEBI:57476"/>
        <dbReference type="ChEBI" id="CHEBI:57661"/>
        <dbReference type="EC" id="2.3.1.46"/>
    </reaction>
</comment>
<comment type="pathway">
    <text evidence="1">Amino-acid biosynthesis; L-methionine biosynthesis via de novo pathway; O-succinyl-L-homoserine from L-homoserine: step 1/1.</text>
</comment>
<comment type="subunit">
    <text evidence="1">Homodimer.</text>
</comment>
<comment type="subcellular location">
    <subcellularLocation>
        <location evidence="1">Cytoplasm</location>
    </subcellularLocation>
</comment>
<comment type="similarity">
    <text evidence="1">Belongs to the AB hydrolase superfamily. MetX family.</text>
</comment>
<evidence type="ECO:0000255" key="1">
    <source>
        <dbReference type="HAMAP-Rule" id="MF_00296"/>
    </source>
</evidence>
<gene>
    <name evidence="1" type="primary">metXS</name>
    <name type="ordered locus">ABBFA_003062</name>
</gene>
<dbReference type="EC" id="2.3.1.46" evidence="1"/>
<dbReference type="EMBL" id="CP001172">
    <property type="protein sequence ID" value="ACJ59159.1"/>
    <property type="molecule type" value="Genomic_DNA"/>
</dbReference>
<dbReference type="SMR" id="B7H098"/>
<dbReference type="ESTHER" id="acib3-metx">
    <property type="family name" value="Homoserine_transacetylase"/>
</dbReference>
<dbReference type="HOGENOM" id="CLU_028760_1_2_6"/>
<dbReference type="UniPathway" id="UPA00051">
    <property type="reaction ID" value="UER00075"/>
</dbReference>
<dbReference type="Proteomes" id="UP000006924">
    <property type="component" value="Chromosome"/>
</dbReference>
<dbReference type="GO" id="GO:0005737">
    <property type="term" value="C:cytoplasm"/>
    <property type="evidence" value="ECO:0007669"/>
    <property type="project" value="UniProtKB-SubCell"/>
</dbReference>
<dbReference type="GO" id="GO:0004414">
    <property type="term" value="F:homoserine O-acetyltransferase activity"/>
    <property type="evidence" value="ECO:0007669"/>
    <property type="project" value="TreeGrafter"/>
</dbReference>
<dbReference type="GO" id="GO:0008899">
    <property type="term" value="F:homoserine O-succinyltransferase activity"/>
    <property type="evidence" value="ECO:0007669"/>
    <property type="project" value="UniProtKB-UniRule"/>
</dbReference>
<dbReference type="GO" id="GO:0009092">
    <property type="term" value="P:homoserine metabolic process"/>
    <property type="evidence" value="ECO:0007669"/>
    <property type="project" value="TreeGrafter"/>
</dbReference>
<dbReference type="GO" id="GO:0009086">
    <property type="term" value="P:methionine biosynthetic process"/>
    <property type="evidence" value="ECO:0007669"/>
    <property type="project" value="UniProtKB-UniRule"/>
</dbReference>
<dbReference type="FunFam" id="1.10.1740.110:FF:000001">
    <property type="entry name" value="Homoserine O-acetyltransferase"/>
    <property type="match status" value="1"/>
</dbReference>
<dbReference type="Gene3D" id="1.10.1740.110">
    <property type="match status" value="1"/>
</dbReference>
<dbReference type="Gene3D" id="3.40.50.1820">
    <property type="entry name" value="alpha/beta hydrolase"/>
    <property type="match status" value="1"/>
</dbReference>
<dbReference type="HAMAP" id="MF_00296">
    <property type="entry name" value="MetX_acyltransf"/>
    <property type="match status" value="1"/>
</dbReference>
<dbReference type="InterPro" id="IPR000073">
    <property type="entry name" value="AB_hydrolase_1"/>
</dbReference>
<dbReference type="InterPro" id="IPR029058">
    <property type="entry name" value="AB_hydrolase_fold"/>
</dbReference>
<dbReference type="InterPro" id="IPR008220">
    <property type="entry name" value="HAT_MetX-like"/>
</dbReference>
<dbReference type="NCBIfam" id="TIGR01392">
    <property type="entry name" value="homoserO_Ac_trn"/>
    <property type="match status" value="1"/>
</dbReference>
<dbReference type="NCBIfam" id="NF001209">
    <property type="entry name" value="PRK00175.1"/>
    <property type="match status" value="1"/>
</dbReference>
<dbReference type="PANTHER" id="PTHR32268">
    <property type="entry name" value="HOMOSERINE O-ACETYLTRANSFERASE"/>
    <property type="match status" value="1"/>
</dbReference>
<dbReference type="PANTHER" id="PTHR32268:SF11">
    <property type="entry name" value="HOMOSERINE O-ACETYLTRANSFERASE"/>
    <property type="match status" value="1"/>
</dbReference>
<dbReference type="Pfam" id="PF00561">
    <property type="entry name" value="Abhydrolase_1"/>
    <property type="match status" value="1"/>
</dbReference>
<dbReference type="PIRSF" id="PIRSF000443">
    <property type="entry name" value="Homoser_Ac_trans"/>
    <property type="match status" value="1"/>
</dbReference>
<dbReference type="SUPFAM" id="SSF53474">
    <property type="entry name" value="alpha/beta-Hydrolases"/>
    <property type="match status" value="1"/>
</dbReference>
<organism>
    <name type="scientific">Acinetobacter baumannii (strain AB307-0294)</name>
    <dbReference type="NCBI Taxonomy" id="557600"/>
    <lineage>
        <taxon>Bacteria</taxon>
        <taxon>Pseudomonadati</taxon>
        <taxon>Pseudomonadota</taxon>
        <taxon>Gammaproteobacteria</taxon>
        <taxon>Moraxellales</taxon>
        <taxon>Moraxellaceae</taxon>
        <taxon>Acinetobacter</taxon>
        <taxon>Acinetobacter calcoaceticus/baumannii complex</taxon>
    </lineage>
</organism>
<reference key="1">
    <citation type="journal article" date="2008" name="J. Bacteriol.">
        <title>Comparative genome sequence analysis of multidrug-resistant Acinetobacter baumannii.</title>
        <authorList>
            <person name="Adams M.D."/>
            <person name="Goglin K."/>
            <person name="Molyneaux N."/>
            <person name="Hujer K.M."/>
            <person name="Lavender H."/>
            <person name="Jamison J.J."/>
            <person name="MacDonald I.J."/>
            <person name="Martin K.M."/>
            <person name="Russo T."/>
            <person name="Campagnari A.A."/>
            <person name="Hujer A.M."/>
            <person name="Bonomo R.A."/>
            <person name="Gill S.R."/>
        </authorList>
    </citation>
    <scope>NUCLEOTIDE SEQUENCE [LARGE SCALE GENOMIC DNA]</scope>
    <source>
        <strain>AB307-0294</strain>
    </source>
</reference>
<feature type="chain" id="PRO_1000119455" description="Homoserine O-succinyltransferase">
    <location>
        <begin position="1"/>
        <end position="386"/>
    </location>
</feature>
<feature type="domain" description="AB hydrolase-1" evidence="1">
    <location>
        <begin position="49"/>
        <end position="358"/>
    </location>
</feature>
<feature type="active site" description="Nucleophile" evidence="1">
    <location>
        <position position="156"/>
    </location>
</feature>
<feature type="active site" evidence="1">
    <location>
        <position position="321"/>
    </location>
</feature>
<feature type="active site" evidence="1">
    <location>
        <position position="354"/>
    </location>
</feature>
<feature type="binding site" evidence="1">
    <location>
        <position position="226"/>
    </location>
    <ligand>
        <name>substrate</name>
    </ligand>
</feature>
<feature type="binding site" evidence="1">
    <location>
        <position position="355"/>
    </location>
    <ligand>
        <name>substrate</name>
    </ligand>
</feature>
<feature type="site" description="Important for acyl-CoA specificity" evidence="1">
    <location>
        <position position="323"/>
    </location>
</feature>
<sequence length="386" mass="43322">MSFPADSVGLVTPQKFQFEEPLHLECGRVLPRFELMVETYGTLNADKSNAILICHALSGHHHAAGYHHEDDKKAGWWDSCIGPGKAIDTNKFFVVALNNIGGCSGSTGPTSPNPENDNRPYGPDFPLVTVRDWVKTQAMLSDRLGISVWYAVVGGSLGGMQALQWSVDYPDRLQKCVVIASAPKLSAQNIAFNEVARQSILSDPDFHHGRYLEKDSYPKRGLILARMVGHITYLSEEAMKQKFGRDLKSGKFMYGFDVEFQVESYLRYQGEQFSRNFDANTYLIMTKALDYFDPSREYGHSLTEAMSKTKCQFLIVSFTTDWRFAPSRSQEIVDALITNQKPVSYLDIDAEQGHDSFLFPIPLYVKTLRAFLGGEEHLKSTSLEAS</sequence>
<accession>B7H098</accession>